<name>HAOX2_HUMAN</name>
<reference key="1">
    <citation type="journal article" date="2000" name="J. Biol. Chem.">
        <title>Identification and characterization of HAOX1, HAOX2, and HAOX3, three human peroxisomal 2-hydroxy acid oxidases.</title>
        <authorList>
            <person name="Jones J.M."/>
            <person name="Morrell J.C."/>
            <person name="Gould S.J."/>
        </authorList>
    </citation>
    <scope>NUCLEOTIDE SEQUENCE [MRNA] (ISOFORM 1)</scope>
    <scope>FUNCTION</scope>
    <scope>TISSUE SPECIFICITY</scope>
    <scope>CATALYTIC ACTIVITY</scope>
    <scope>SUBSTRATE SPECIFICITY</scope>
    <scope>SUBCELLULAR LOCATION</scope>
    <scope>PATHWAY</scope>
</reference>
<reference key="2">
    <citation type="submission" date="1999-11" db="EMBL/GenBank/DDBJ databases">
        <title>Human long-chain L-2-hydroxy acid oxidase.</title>
        <authorList>
            <person name="Spielbauer B."/>
            <person name="Conzelmann E."/>
        </authorList>
    </citation>
    <scope>NUCLEOTIDE SEQUENCE [MRNA] (ISOFORM 1)</scope>
</reference>
<reference key="3">
    <citation type="submission" date="2003-12" db="EMBL/GenBank/DDBJ databases">
        <title>Identification of a human cell growth inhibiting gene.</title>
        <authorList>
            <person name="Kim J.W."/>
        </authorList>
    </citation>
    <scope>NUCLEOTIDE SEQUENCE [LARGE SCALE MRNA] (ISOFORM 1)</scope>
</reference>
<reference key="4">
    <citation type="journal article" date="2004" name="Nat. Genet.">
        <title>Complete sequencing and characterization of 21,243 full-length human cDNAs.</title>
        <authorList>
            <person name="Ota T."/>
            <person name="Suzuki Y."/>
            <person name="Nishikawa T."/>
            <person name="Otsuki T."/>
            <person name="Sugiyama T."/>
            <person name="Irie R."/>
            <person name="Wakamatsu A."/>
            <person name="Hayashi K."/>
            <person name="Sato H."/>
            <person name="Nagai K."/>
            <person name="Kimura K."/>
            <person name="Makita H."/>
            <person name="Sekine M."/>
            <person name="Obayashi M."/>
            <person name="Nishi T."/>
            <person name="Shibahara T."/>
            <person name="Tanaka T."/>
            <person name="Ishii S."/>
            <person name="Yamamoto J."/>
            <person name="Saito K."/>
            <person name="Kawai Y."/>
            <person name="Isono Y."/>
            <person name="Nakamura Y."/>
            <person name="Nagahari K."/>
            <person name="Murakami K."/>
            <person name="Yasuda T."/>
            <person name="Iwayanagi T."/>
            <person name="Wagatsuma M."/>
            <person name="Shiratori A."/>
            <person name="Sudo H."/>
            <person name="Hosoiri T."/>
            <person name="Kaku Y."/>
            <person name="Kodaira H."/>
            <person name="Kondo H."/>
            <person name="Sugawara M."/>
            <person name="Takahashi M."/>
            <person name="Kanda K."/>
            <person name="Yokoi T."/>
            <person name="Furuya T."/>
            <person name="Kikkawa E."/>
            <person name="Omura Y."/>
            <person name="Abe K."/>
            <person name="Kamihara K."/>
            <person name="Katsuta N."/>
            <person name="Sato K."/>
            <person name="Tanikawa M."/>
            <person name="Yamazaki M."/>
            <person name="Ninomiya K."/>
            <person name="Ishibashi T."/>
            <person name="Yamashita H."/>
            <person name="Murakawa K."/>
            <person name="Fujimori K."/>
            <person name="Tanai H."/>
            <person name="Kimata M."/>
            <person name="Watanabe M."/>
            <person name="Hiraoka S."/>
            <person name="Chiba Y."/>
            <person name="Ishida S."/>
            <person name="Ono Y."/>
            <person name="Takiguchi S."/>
            <person name="Watanabe S."/>
            <person name="Yosida M."/>
            <person name="Hotuta T."/>
            <person name="Kusano J."/>
            <person name="Kanehori K."/>
            <person name="Takahashi-Fujii A."/>
            <person name="Hara H."/>
            <person name="Tanase T.-O."/>
            <person name="Nomura Y."/>
            <person name="Togiya S."/>
            <person name="Komai F."/>
            <person name="Hara R."/>
            <person name="Takeuchi K."/>
            <person name="Arita M."/>
            <person name="Imose N."/>
            <person name="Musashino K."/>
            <person name="Yuuki H."/>
            <person name="Oshima A."/>
            <person name="Sasaki N."/>
            <person name="Aotsuka S."/>
            <person name="Yoshikawa Y."/>
            <person name="Matsunawa H."/>
            <person name="Ichihara T."/>
            <person name="Shiohata N."/>
            <person name="Sano S."/>
            <person name="Moriya S."/>
            <person name="Momiyama H."/>
            <person name="Satoh N."/>
            <person name="Takami S."/>
            <person name="Terashima Y."/>
            <person name="Suzuki O."/>
            <person name="Nakagawa S."/>
            <person name="Senoh A."/>
            <person name="Mizoguchi H."/>
            <person name="Goto Y."/>
            <person name="Shimizu F."/>
            <person name="Wakebe H."/>
            <person name="Hishigaki H."/>
            <person name="Watanabe T."/>
            <person name="Sugiyama A."/>
            <person name="Takemoto M."/>
            <person name="Kawakami B."/>
            <person name="Yamazaki M."/>
            <person name="Watanabe K."/>
            <person name="Kumagai A."/>
            <person name="Itakura S."/>
            <person name="Fukuzumi Y."/>
            <person name="Fujimori Y."/>
            <person name="Komiyama M."/>
            <person name="Tashiro H."/>
            <person name="Tanigami A."/>
            <person name="Fujiwara T."/>
            <person name="Ono T."/>
            <person name="Yamada K."/>
            <person name="Fujii Y."/>
            <person name="Ozaki K."/>
            <person name="Hirao M."/>
            <person name="Ohmori Y."/>
            <person name="Kawabata A."/>
            <person name="Hikiji T."/>
            <person name="Kobatake N."/>
            <person name="Inagaki H."/>
            <person name="Ikema Y."/>
            <person name="Okamoto S."/>
            <person name="Okitani R."/>
            <person name="Kawakami T."/>
            <person name="Noguchi S."/>
            <person name="Itoh T."/>
            <person name="Shigeta K."/>
            <person name="Senba T."/>
            <person name="Matsumura K."/>
            <person name="Nakajima Y."/>
            <person name="Mizuno T."/>
            <person name="Morinaga M."/>
            <person name="Sasaki M."/>
            <person name="Togashi T."/>
            <person name="Oyama M."/>
            <person name="Hata H."/>
            <person name="Watanabe M."/>
            <person name="Komatsu T."/>
            <person name="Mizushima-Sugano J."/>
            <person name="Satoh T."/>
            <person name="Shirai Y."/>
            <person name="Takahashi Y."/>
            <person name="Nakagawa K."/>
            <person name="Okumura K."/>
            <person name="Nagase T."/>
            <person name="Nomura N."/>
            <person name="Kikuchi H."/>
            <person name="Masuho Y."/>
            <person name="Yamashita R."/>
            <person name="Nakai K."/>
            <person name="Yada T."/>
            <person name="Nakamura Y."/>
            <person name="Ohara O."/>
            <person name="Isogai T."/>
            <person name="Sugano S."/>
        </authorList>
    </citation>
    <scope>NUCLEOTIDE SEQUENCE [LARGE SCALE MRNA] (ISOFORM 2)</scope>
    <source>
        <tissue>Kidney</tissue>
    </source>
</reference>
<reference key="5">
    <citation type="journal article" date="2006" name="Nature">
        <title>The DNA sequence and biological annotation of human chromosome 1.</title>
        <authorList>
            <person name="Gregory S.G."/>
            <person name="Barlow K.F."/>
            <person name="McLay K.E."/>
            <person name="Kaul R."/>
            <person name="Swarbreck D."/>
            <person name="Dunham A."/>
            <person name="Scott C.E."/>
            <person name="Howe K.L."/>
            <person name="Woodfine K."/>
            <person name="Spencer C.C.A."/>
            <person name="Jones M.C."/>
            <person name="Gillson C."/>
            <person name="Searle S."/>
            <person name="Zhou Y."/>
            <person name="Kokocinski F."/>
            <person name="McDonald L."/>
            <person name="Evans R."/>
            <person name="Phillips K."/>
            <person name="Atkinson A."/>
            <person name="Cooper R."/>
            <person name="Jones C."/>
            <person name="Hall R.E."/>
            <person name="Andrews T.D."/>
            <person name="Lloyd C."/>
            <person name="Ainscough R."/>
            <person name="Almeida J.P."/>
            <person name="Ambrose K.D."/>
            <person name="Anderson F."/>
            <person name="Andrew R.W."/>
            <person name="Ashwell R.I.S."/>
            <person name="Aubin K."/>
            <person name="Babbage A.K."/>
            <person name="Bagguley C.L."/>
            <person name="Bailey J."/>
            <person name="Beasley H."/>
            <person name="Bethel G."/>
            <person name="Bird C.P."/>
            <person name="Bray-Allen S."/>
            <person name="Brown J.Y."/>
            <person name="Brown A.J."/>
            <person name="Buckley D."/>
            <person name="Burton J."/>
            <person name="Bye J."/>
            <person name="Carder C."/>
            <person name="Chapman J.C."/>
            <person name="Clark S.Y."/>
            <person name="Clarke G."/>
            <person name="Clee C."/>
            <person name="Cobley V."/>
            <person name="Collier R.E."/>
            <person name="Corby N."/>
            <person name="Coville G.J."/>
            <person name="Davies J."/>
            <person name="Deadman R."/>
            <person name="Dunn M."/>
            <person name="Earthrowl M."/>
            <person name="Ellington A.G."/>
            <person name="Errington H."/>
            <person name="Frankish A."/>
            <person name="Frankland J."/>
            <person name="French L."/>
            <person name="Garner P."/>
            <person name="Garnett J."/>
            <person name="Gay L."/>
            <person name="Ghori M.R.J."/>
            <person name="Gibson R."/>
            <person name="Gilby L.M."/>
            <person name="Gillett W."/>
            <person name="Glithero R.J."/>
            <person name="Grafham D.V."/>
            <person name="Griffiths C."/>
            <person name="Griffiths-Jones S."/>
            <person name="Grocock R."/>
            <person name="Hammond S."/>
            <person name="Harrison E.S.I."/>
            <person name="Hart E."/>
            <person name="Haugen E."/>
            <person name="Heath P.D."/>
            <person name="Holmes S."/>
            <person name="Holt K."/>
            <person name="Howden P.J."/>
            <person name="Hunt A.R."/>
            <person name="Hunt S.E."/>
            <person name="Hunter G."/>
            <person name="Isherwood J."/>
            <person name="James R."/>
            <person name="Johnson C."/>
            <person name="Johnson D."/>
            <person name="Joy A."/>
            <person name="Kay M."/>
            <person name="Kershaw J.K."/>
            <person name="Kibukawa M."/>
            <person name="Kimberley A.M."/>
            <person name="King A."/>
            <person name="Knights A.J."/>
            <person name="Lad H."/>
            <person name="Laird G."/>
            <person name="Lawlor S."/>
            <person name="Leongamornlert D.A."/>
            <person name="Lloyd D.M."/>
            <person name="Loveland J."/>
            <person name="Lovell J."/>
            <person name="Lush M.J."/>
            <person name="Lyne R."/>
            <person name="Martin S."/>
            <person name="Mashreghi-Mohammadi M."/>
            <person name="Matthews L."/>
            <person name="Matthews N.S.W."/>
            <person name="McLaren S."/>
            <person name="Milne S."/>
            <person name="Mistry S."/>
            <person name="Moore M.J.F."/>
            <person name="Nickerson T."/>
            <person name="O'Dell C.N."/>
            <person name="Oliver K."/>
            <person name="Palmeiri A."/>
            <person name="Palmer S.A."/>
            <person name="Parker A."/>
            <person name="Patel D."/>
            <person name="Pearce A.V."/>
            <person name="Peck A.I."/>
            <person name="Pelan S."/>
            <person name="Phelps K."/>
            <person name="Phillimore B.J."/>
            <person name="Plumb R."/>
            <person name="Rajan J."/>
            <person name="Raymond C."/>
            <person name="Rouse G."/>
            <person name="Saenphimmachak C."/>
            <person name="Sehra H.K."/>
            <person name="Sheridan E."/>
            <person name="Shownkeen R."/>
            <person name="Sims S."/>
            <person name="Skuce C.D."/>
            <person name="Smith M."/>
            <person name="Steward C."/>
            <person name="Subramanian S."/>
            <person name="Sycamore N."/>
            <person name="Tracey A."/>
            <person name="Tromans A."/>
            <person name="Van Helmond Z."/>
            <person name="Wall M."/>
            <person name="Wallis J.M."/>
            <person name="White S."/>
            <person name="Whitehead S.L."/>
            <person name="Wilkinson J.E."/>
            <person name="Willey D.L."/>
            <person name="Williams H."/>
            <person name="Wilming L."/>
            <person name="Wray P.W."/>
            <person name="Wu Z."/>
            <person name="Coulson A."/>
            <person name="Vaudin M."/>
            <person name="Sulston J.E."/>
            <person name="Durbin R.M."/>
            <person name="Hubbard T."/>
            <person name="Wooster R."/>
            <person name="Dunham I."/>
            <person name="Carter N.P."/>
            <person name="McVean G."/>
            <person name="Ross M.T."/>
            <person name="Harrow J."/>
            <person name="Olson M.V."/>
            <person name="Beck S."/>
            <person name="Rogers J."/>
            <person name="Bentley D.R."/>
        </authorList>
    </citation>
    <scope>NUCLEOTIDE SEQUENCE [LARGE SCALE GENOMIC DNA]</scope>
</reference>
<reference key="6">
    <citation type="submission" date="2005-07" db="EMBL/GenBank/DDBJ databases">
        <authorList>
            <person name="Mural R.J."/>
            <person name="Istrail S."/>
            <person name="Sutton G.G."/>
            <person name="Florea L."/>
            <person name="Halpern A.L."/>
            <person name="Mobarry C.M."/>
            <person name="Lippert R."/>
            <person name="Walenz B."/>
            <person name="Shatkay H."/>
            <person name="Dew I."/>
            <person name="Miller J.R."/>
            <person name="Flanigan M.J."/>
            <person name="Edwards N.J."/>
            <person name="Bolanos R."/>
            <person name="Fasulo D."/>
            <person name="Halldorsson B.V."/>
            <person name="Hannenhalli S."/>
            <person name="Turner R."/>
            <person name="Yooseph S."/>
            <person name="Lu F."/>
            <person name="Nusskern D.R."/>
            <person name="Shue B.C."/>
            <person name="Zheng X.H."/>
            <person name="Zhong F."/>
            <person name="Delcher A.L."/>
            <person name="Huson D.H."/>
            <person name="Kravitz S.A."/>
            <person name="Mouchard L."/>
            <person name="Reinert K."/>
            <person name="Remington K.A."/>
            <person name="Clark A.G."/>
            <person name="Waterman M.S."/>
            <person name="Eichler E.E."/>
            <person name="Adams M.D."/>
            <person name="Hunkapiller M.W."/>
            <person name="Myers E.W."/>
            <person name="Venter J.C."/>
        </authorList>
    </citation>
    <scope>NUCLEOTIDE SEQUENCE [LARGE SCALE GENOMIC DNA]</scope>
</reference>
<reference key="7">
    <citation type="journal article" date="2004" name="Genome Res.">
        <title>The status, quality, and expansion of the NIH full-length cDNA project: the Mammalian Gene Collection (MGC).</title>
        <authorList>
            <consortium name="The MGC Project Team"/>
        </authorList>
    </citation>
    <scope>NUCLEOTIDE SEQUENCE [LARGE SCALE MRNA] (ISOFORM 1)</scope>
    <source>
        <tissue>Kidney</tissue>
    </source>
</reference>
<reference key="8">
    <citation type="journal article" date="2014" name="J. Proteomics">
        <title>An enzyme assisted RP-RPLC approach for in-depth analysis of human liver phosphoproteome.</title>
        <authorList>
            <person name="Bian Y."/>
            <person name="Song C."/>
            <person name="Cheng K."/>
            <person name="Dong M."/>
            <person name="Wang F."/>
            <person name="Huang J."/>
            <person name="Sun D."/>
            <person name="Wang L."/>
            <person name="Ye M."/>
            <person name="Zou H."/>
        </authorList>
    </citation>
    <scope>PHOSPHORYLATION [LARGE SCALE ANALYSIS] AT THR-178</scope>
    <scope>IDENTIFICATION BY MASS SPECTROMETRY [LARGE SCALE ANALYSIS]</scope>
    <source>
        <tissue>Liver</tissue>
    </source>
</reference>
<organism>
    <name type="scientific">Homo sapiens</name>
    <name type="common">Human</name>
    <dbReference type="NCBI Taxonomy" id="9606"/>
    <lineage>
        <taxon>Eukaryota</taxon>
        <taxon>Metazoa</taxon>
        <taxon>Chordata</taxon>
        <taxon>Craniata</taxon>
        <taxon>Vertebrata</taxon>
        <taxon>Euteleostomi</taxon>
        <taxon>Mammalia</taxon>
        <taxon>Eutheria</taxon>
        <taxon>Euarchontoglires</taxon>
        <taxon>Primates</taxon>
        <taxon>Haplorrhini</taxon>
        <taxon>Catarrhini</taxon>
        <taxon>Hominidae</taxon>
        <taxon>Homo</taxon>
    </lineage>
</organism>
<feature type="chain" id="PRO_0000206320" description="2-Hydroxyacid oxidase 2">
    <location>
        <begin position="1"/>
        <end position="351"/>
    </location>
</feature>
<feature type="domain" description="FMN hydroxy acid dehydrogenase" evidence="4">
    <location>
        <begin position="2"/>
        <end position="351"/>
    </location>
</feature>
<feature type="short sequence motif" description="Microbody targeting signal" evidence="3">
    <location>
        <begin position="349"/>
        <end position="351"/>
    </location>
</feature>
<feature type="active site" description="Proton acceptor" evidence="4">
    <location>
        <position position="246"/>
    </location>
</feature>
<feature type="binding site" evidence="1">
    <location>
        <begin position="77"/>
        <end position="79"/>
    </location>
    <ligand>
        <name>FMN</name>
        <dbReference type="ChEBI" id="CHEBI:58210"/>
    </ligand>
</feature>
<feature type="binding site" evidence="1">
    <location>
        <position position="106"/>
    </location>
    <ligand>
        <name>FMN</name>
        <dbReference type="ChEBI" id="CHEBI:58210"/>
    </ligand>
</feature>
<feature type="binding site" evidence="1">
    <location>
        <position position="128"/>
    </location>
    <ligand>
        <name>FMN</name>
        <dbReference type="ChEBI" id="CHEBI:58210"/>
    </ligand>
</feature>
<feature type="binding site" evidence="4">
    <location>
        <position position="130"/>
    </location>
    <ligand>
        <name>a 2-oxocarboxylate</name>
        <dbReference type="ChEBI" id="CHEBI:35179"/>
    </ligand>
</feature>
<feature type="binding site" evidence="1">
    <location>
        <position position="156"/>
    </location>
    <ligand>
        <name>FMN</name>
        <dbReference type="ChEBI" id="CHEBI:58210"/>
    </ligand>
</feature>
<feature type="binding site" evidence="4">
    <location>
        <position position="165"/>
    </location>
    <ligand>
        <name>a 2-oxocarboxylate</name>
        <dbReference type="ChEBI" id="CHEBI:35179"/>
    </ligand>
</feature>
<feature type="binding site" evidence="1">
    <location>
        <position position="222"/>
    </location>
    <ligand>
        <name>FMN</name>
        <dbReference type="ChEBI" id="CHEBI:58210"/>
    </ligand>
</feature>
<feature type="binding site" evidence="4">
    <location>
        <position position="249"/>
    </location>
    <ligand>
        <name>a 2-oxocarboxylate</name>
        <dbReference type="ChEBI" id="CHEBI:35179"/>
    </ligand>
</feature>
<feature type="binding site" evidence="1">
    <location>
        <begin position="277"/>
        <end position="281"/>
    </location>
    <ligand>
        <name>FMN</name>
        <dbReference type="ChEBI" id="CHEBI:58210"/>
    </ligand>
</feature>
<feature type="binding site" evidence="1">
    <location>
        <begin position="300"/>
        <end position="301"/>
    </location>
    <ligand>
        <name>FMN</name>
        <dbReference type="ChEBI" id="CHEBI:58210"/>
    </ligand>
</feature>
<feature type="modified residue" description="Phosphothreonine" evidence="10">
    <location>
        <position position="178"/>
    </location>
</feature>
<feature type="splice variant" id="VSP_055095" description="In isoform 2." evidence="7">
    <original>M</original>
    <variation>MEDKMWSECEGPEM</variation>
    <location>
        <position position="1"/>
    </location>
</feature>
<feature type="sequence variant" id="VAR_049087" description="In dbSNP:rs34638261.">
    <original>E</original>
    <variation>K</variation>
    <location>
        <position position="15"/>
    </location>
</feature>
<feature type="sequence variant" id="VAR_049088" description="In dbSNP:rs6661625.">
    <original>L</original>
    <variation>M</variation>
    <location>
        <position position="221"/>
    </location>
</feature>
<feature type="sequence conflict" description="In Ref. 2; AAF14000." evidence="8" ref="2">
    <original>F</original>
    <variation>Y</variation>
    <location>
        <position position="80"/>
    </location>
</feature>
<feature type="sequence conflict" description="In Ref. 2; AAF14000." evidence="8" ref="2">
    <original>LGA</original>
    <variation>HED</variation>
    <location>
        <begin position="292"/>
        <end position="294"/>
    </location>
</feature>
<proteinExistence type="evidence at protein level"/>
<accession>Q9NYQ3</accession>
<accession>Q2TU86</accession>
<accession>Q5QP00</accession>
<accession>Q9UJS6</accession>
<dbReference type="EC" id="1.1.3.15" evidence="9"/>
<dbReference type="EMBL" id="AF231917">
    <property type="protein sequence ID" value="AAF40200.1"/>
    <property type="molecule type" value="mRNA"/>
</dbReference>
<dbReference type="EMBL" id="AF203975">
    <property type="protein sequence ID" value="AAF14000.1"/>
    <property type="molecule type" value="mRNA"/>
</dbReference>
<dbReference type="EMBL" id="AY513277">
    <property type="protein sequence ID" value="AAT08030.1"/>
    <property type="molecule type" value="mRNA"/>
</dbReference>
<dbReference type="EMBL" id="AK298289">
    <property type="protein sequence ID" value="BAG60549.1"/>
    <property type="molecule type" value="mRNA"/>
</dbReference>
<dbReference type="EMBL" id="AL139346">
    <property type="status" value="NOT_ANNOTATED_CDS"/>
    <property type="molecule type" value="Genomic_DNA"/>
</dbReference>
<dbReference type="EMBL" id="AL359553">
    <property type="status" value="NOT_ANNOTATED_CDS"/>
    <property type="molecule type" value="Genomic_DNA"/>
</dbReference>
<dbReference type="EMBL" id="CH471122">
    <property type="protein sequence ID" value="EAW56698.1"/>
    <property type="molecule type" value="Genomic_DNA"/>
</dbReference>
<dbReference type="EMBL" id="CH471122">
    <property type="protein sequence ID" value="EAW56699.1"/>
    <property type="molecule type" value="Genomic_DNA"/>
</dbReference>
<dbReference type="EMBL" id="BC020863">
    <property type="protein sequence ID" value="AAH20863.1"/>
    <property type="molecule type" value="mRNA"/>
</dbReference>
<dbReference type="CCDS" id="CCDS76196.1">
    <molecule id="Q9NYQ3-2"/>
</dbReference>
<dbReference type="CCDS" id="CCDS901.1">
    <molecule id="Q9NYQ3-1"/>
</dbReference>
<dbReference type="RefSeq" id="NP_001005783.2">
    <molecule id="Q9NYQ3-2"/>
    <property type="nucleotide sequence ID" value="NM_001005783.3"/>
</dbReference>
<dbReference type="RefSeq" id="NP_057611.1">
    <molecule id="Q9NYQ3-1"/>
    <property type="nucleotide sequence ID" value="NM_016527.4"/>
</dbReference>
<dbReference type="SMR" id="Q9NYQ3"/>
<dbReference type="BioGRID" id="119356">
    <property type="interactions" value="30"/>
</dbReference>
<dbReference type="FunCoup" id="Q9NYQ3">
    <property type="interactions" value="235"/>
</dbReference>
<dbReference type="IntAct" id="Q9NYQ3">
    <property type="interactions" value="27"/>
</dbReference>
<dbReference type="STRING" id="9606.ENSP00000354314"/>
<dbReference type="BindingDB" id="Q9NYQ3"/>
<dbReference type="ChEMBL" id="CHEMBL2169732"/>
<dbReference type="DrugBank" id="DB03247">
    <property type="generic name" value="Flavin mononucleotide"/>
</dbReference>
<dbReference type="iPTMnet" id="Q9NYQ3"/>
<dbReference type="PhosphoSitePlus" id="Q9NYQ3"/>
<dbReference type="BioMuta" id="HAO2"/>
<dbReference type="DMDM" id="13124287"/>
<dbReference type="jPOST" id="Q9NYQ3"/>
<dbReference type="MassIVE" id="Q9NYQ3"/>
<dbReference type="PaxDb" id="9606-ENSP00000483507"/>
<dbReference type="PeptideAtlas" id="Q9NYQ3"/>
<dbReference type="ProteomicsDB" id="83262">
    <molecule id="Q9NYQ3-1"/>
</dbReference>
<dbReference type="Antibodypedia" id="33905">
    <property type="antibodies" value="116 antibodies from 23 providers"/>
</dbReference>
<dbReference type="DNASU" id="51179"/>
<dbReference type="Ensembl" id="ENST00000325945.4">
    <molecule id="Q9NYQ3-1"/>
    <property type="protein sequence ID" value="ENSP00000316339.3"/>
    <property type="gene ID" value="ENSG00000116882.15"/>
</dbReference>
<dbReference type="Ensembl" id="ENST00000361035.8">
    <molecule id="Q9NYQ3-2"/>
    <property type="protein sequence ID" value="ENSP00000354314.4"/>
    <property type="gene ID" value="ENSG00000116882.15"/>
</dbReference>
<dbReference type="Ensembl" id="ENST00000622548.4">
    <molecule id="Q9NYQ3-1"/>
    <property type="protein sequence ID" value="ENSP00000483507.1"/>
    <property type="gene ID" value="ENSG00000116882.15"/>
</dbReference>
<dbReference type="GeneID" id="51179"/>
<dbReference type="KEGG" id="hsa:51179"/>
<dbReference type="MANE-Select" id="ENST00000325945.4">
    <property type="protein sequence ID" value="ENSP00000316339.3"/>
    <property type="RefSeq nucleotide sequence ID" value="NM_016527.4"/>
    <property type="RefSeq protein sequence ID" value="NP_057611.1"/>
</dbReference>
<dbReference type="UCSC" id="uc001ehq.1">
    <molecule id="Q9NYQ3-1"/>
    <property type="organism name" value="human"/>
</dbReference>
<dbReference type="AGR" id="HGNC:4810"/>
<dbReference type="CTD" id="51179"/>
<dbReference type="DisGeNET" id="51179"/>
<dbReference type="GeneCards" id="HAO2"/>
<dbReference type="HGNC" id="HGNC:4810">
    <property type="gene designation" value="HAO2"/>
</dbReference>
<dbReference type="HPA" id="ENSG00000116882">
    <property type="expression patterns" value="Group enriched (kidney, liver)"/>
</dbReference>
<dbReference type="MIM" id="605176">
    <property type="type" value="gene"/>
</dbReference>
<dbReference type="neXtProt" id="NX_Q9NYQ3"/>
<dbReference type="OpenTargets" id="ENSG00000116882"/>
<dbReference type="PharmGKB" id="PA29186"/>
<dbReference type="VEuPathDB" id="HostDB:ENSG00000116882"/>
<dbReference type="eggNOG" id="KOG0538">
    <property type="taxonomic scope" value="Eukaryota"/>
</dbReference>
<dbReference type="GeneTree" id="ENSGT00390000018717"/>
<dbReference type="HOGENOM" id="CLU_020639_0_0_1"/>
<dbReference type="InParanoid" id="Q9NYQ3"/>
<dbReference type="OMA" id="WADFQYE"/>
<dbReference type="OrthoDB" id="25826at2759"/>
<dbReference type="PAN-GO" id="Q9NYQ3">
    <property type="GO annotations" value="0 GO annotations based on evolutionary models"/>
</dbReference>
<dbReference type="PhylomeDB" id="Q9NYQ3"/>
<dbReference type="TreeFam" id="TF313363"/>
<dbReference type="BRENDA" id="1.1.3.15">
    <property type="organism ID" value="2681"/>
</dbReference>
<dbReference type="PathwayCommons" id="Q9NYQ3"/>
<dbReference type="Reactome" id="R-HSA-390918">
    <property type="pathway name" value="Peroxisomal lipid metabolism"/>
</dbReference>
<dbReference type="Reactome" id="R-HSA-9033241">
    <property type="pathway name" value="Peroxisomal protein import"/>
</dbReference>
<dbReference type="SignaLink" id="Q9NYQ3"/>
<dbReference type="UniPathway" id="UPA00199"/>
<dbReference type="BioGRID-ORCS" id="51179">
    <property type="hits" value="31 hits in 1149 CRISPR screens"/>
</dbReference>
<dbReference type="ChiTaRS" id="HAO2">
    <property type="organism name" value="human"/>
</dbReference>
<dbReference type="GenomeRNAi" id="51179"/>
<dbReference type="Pharos" id="Q9NYQ3">
    <property type="development level" value="Tchem"/>
</dbReference>
<dbReference type="PRO" id="PR:Q9NYQ3"/>
<dbReference type="Proteomes" id="UP000005640">
    <property type="component" value="Chromosome 1"/>
</dbReference>
<dbReference type="RNAct" id="Q9NYQ3">
    <property type="molecule type" value="protein"/>
</dbReference>
<dbReference type="Bgee" id="ENSG00000116882">
    <property type="expression patterns" value="Expressed in right lobe of liver and 110 other cell types or tissues"/>
</dbReference>
<dbReference type="ExpressionAtlas" id="Q9NYQ3">
    <property type="expression patterns" value="baseline and differential"/>
</dbReference>
<dbReference type="GO" id="GO:0005829">
    <property type="term" value="C:cytosol"/>
    <property type="evidence" value="ECO:0000304"/>
    <property type="project" value="Reactome"/>
</dbReference>
<dbReference type="GO" id="GO:0005782">
    <property type="term" value="C:peroxisomal matrix"/>
    <property type="evidence" value="ECO:0000314"/>
    <property type="project" value="UniProtKB"/>
</dbReference>
<dbReference type="GO" id="GO:0003973">
    <property type="term" value="F:(S)-2-hydroxy-acid oxidase activity"/>
    <property type="evidence" value="ECO:0000314"/>
    <property type="project" value="UniProtKB"/>
</dbReference>
<dbReference type="GO" id="GO:0010181">
    <property type="term" value="F:FMN binding"/>
    <property type="evidence" value="ECO:0007669"/>
    <property type="project" value="InterPro"/>
</dbReference>
<dbReference type="GO" id="GO:0019395">
    <property type="term" value="P:fatty acid oxidation"/>
    <property type="evidence" value="ECO:0000314"/>
    <property type="project" value="UniProtKB"/>
</dbReference>
<dbReference type="CDD" id="cd02809">
    <property type="entry name" value="alpha_hydroxyacid_oxid_FMN"/>
    <property type="match status" value="1"/>
</dbReference>
<dbReference type="FunFam" id="3.20.20.70:FF:000056">
    <property type="entry name" value="hydroxyacid oxidase 2"/>
    <property type="match status" value="1"/>
</dbReference>
<dbReference type="Gene3D" id="3.20.20.70">
    <property type="entry name" value="Aldolase class I"/>
    <property type="match status" value="1"/>
</dbReference>
<dbReference type="InterPro" id="IPR013785">
    <property type="entry name" value="Aldolase_TIM"/>
</dbReference>
<dbReference type="InterPro" id="IPR012133">
    <property type="entry name" value="Alpha-hydoxy_acid_DH_FMN"/>
</dbReference>
<dbReference type="InterPro" id="IPR000262">
    <property type="entry name" value="FMN-dep_DH"/>
</dbReference>
<dbReference type="InterPro" id="IPR037396">
    <property type="entry name" value="FMN_HAD"/>
</dbReference>
<dbReference type="InterPro" id="IPR008259">
    <property type="entry name" value="FMN_hydac_DH_AS"/>
</dbReference>
<dbReference type="PANTHER" id="PTHR10578:SF149">
    <property type="entry name" value="2-HYDROXYACID OXIDASE 2"/>
    <property type="match status" value="1"/>
</dbReference>
<dbReference type="PANTHER" id="PTHR10578">
    <property type="entry name" value="S -2-HYDROXY-ACID OXIDASE-RELATED"/>
    <property type="match status" value="1"/>
</dbReference>
<dbReference type="Pfam" id="PF01070">
    <property type="entry name" value="FMN_dh"/>
    <property type="match status" value="1"/>
</dbReference>
<dbReference type="PIRSF" id="PIRSF000138">
    <property type="entry name" value="Al-hdrx_acd_dh"/>
    <property type="match status" value="1"/>
</dbReference>
<dbReference type="SUPFAM" id="SSF51395">
    <property type="entry name" value="FMN-linked oxidoreductases"/>
    <property type="match status" value="1"/>
</dbReference>
<dbReference type="PROSITE" id="PS00557">
    <property type="entry name" value="FMN_HYDROXY_ACID_DH_1"/>
    <property type="match status" value="1"/>
</dbReference>
<dbReference type="PROSITE" id="PS51349">
    <property type="entry name" value="FMN_HYDROXY_ACID_DH_2"/>
    <property type="match status" value="1"/>
</dbReference>
<evidence type="ECO:0000250" key="1">
    <source>
        <dbReference type="UniProtKB" id="Q07523"/>
    </source>
</evidence>
<evidence type="ECO:0000250" key="2">
    <source>
        <dbReference type="UniProtKB" id="Q9UJM8"/>
    </source>
</evidence>
<evidence type="ECO:0000255" key="3"/>
<evidence type="ECO:0000255" key="4">
    <source>
        <dbReference type="PROSITE-ProRule" id="PRU00683"/>
    </source>
</evidence>
<evidence type="ECO:0000269" key="5">
    <source>
    </source>
</evidence>
<evidence type="ECO:0000303" key="6">
    <source>
    </source>
</evidence>
<evidence type="ECO:0000303" key="7">
    <source>
    </source>
</evidence>
<evidence type="ECO:0000305" key="8"/>
<evidence type="ECO:0000305" key="9">
    <source>
    </source>
</evidence>
<evidence type="ECO:0007744" key="10">
    <source>
    </source>
</evidence>
<protein>
    <recommendedName>
        <fullName evidence="6">2-Hydroxyacid oxidase 2</fullName>
        <shortName evidence="6">HAOX2</shortName>
        <ecNumber evidence="9">1.1.3.15</ecNumber>
    </recommendedName>
    <alternativeName>
        <fullName>(S)-2-hydroxy-acid oxidase, peroxisomal</fullName>
    </alternativeName>
    <alternativeName>
        <fullName>Cell growth-inhibiting gene 16 protein</fullName>
    </alternativeName>
    <alternativeName>
        <fullName>Long chain alpha-hydroxy acid oxidase</fullName>
    </alternativeName>
    <alternativeName>
        <fullName>Long-chain L-2-hydroxy acid oxidase</fullName>
    </alternativeName>
</protein>
<comment type="function">
    <text evidence="5 9">Oxidase that catalyzes the oxidation of medium and long chain hydroxyacids such as 2-hydroxyhexadecanoate and 2-hydroxyoctanoate, to the correspondong 2-oxoacids (PubMed:10777549). Its role in the oxidation of 2-hydroxy fatty acids may contribute to the general pathway of fatty acid alpha-oxidation (Probable). Active in vitro with the artificial electron acceptor 2,6-dichlorophenolindophenol (DCIP), but O2 is believed to be the physiological electron acceptor, leading to the production of H2O2. Is not active on glycolate, glyoxylate, L-lactate and 2-hydroxybutanoate (PubMed:10777549).</text>
</comment>
<comment type="catalytic activity">
    <reaction evidence="9">
        <text>a (2S)-2-hydroxycarboxylate + O2 = a 2-oxocarboxylate + H2O2</text>
        <dbReference type="Rhea" id="RHEA:16789"/>
        <dbReference type="ChEBI" id="CHEBI:15379"/>
        <dbReference type="ChEBI" id="CHEBI:16240"/>
        <dbReference type="ChEBI" id="CHEBI:35179"/>
        <dbReference type="ChEBI" id="CHEBI:58123"/>
        <dbReference type="EC" id="1.1.3.15"/>
    </reaction>
    <physiologicalReaction direction="left-to-right" evidence="9">
        <dbReference type="Rhea" id="RHEA:16790"/>
    </physiologicalReaction>
</comment>
<comment type="catalytic activity">
    <reaction evidence="9">
        <text>2-hydroxyhexadecanoate + O2 = 2-oxohexadecanoate + H2O2</text>
        <dbReference type="Rhea" id="RHEA:67944"/>
        <dbReference type="ChEBI" id="CHEBI:15379"/>
        <dbReference type="ChEBI" id="CHEBI:16240"/>
        <dbReference type="ChEBI" id="CHEBI:65097"/>
        <dbReference type="ChEBI" id="CHEBI:176593"/>
    </reaction>
    <physiologicalReaction direction="left-to-right" evidence="9">
        <dbReference type="Rhea" id="RHEA:67945"/>
    </physiologicalReaction>
</comment>
<comment type="catalytic activity">
    <reaction evidence="9">
        <text>2-hydroxyoctanoate + O2 = 2-oxooctanoate + H2O2</text>
        <dbReference type="Rhea" id="RHEA:67940"/>
        <dbReference type="ChEBI" id="CHEBI:15379"/>
        <dbReference type="ChEBI" id="CHEBI:16240"/>
        <dbReference type="ChEBI" id="CHEBI:133514"/>
        <dbReference type="ChEBI" id="CHEBI:176689"/>
    </reaction>
    <physiologicalReaction direction="left-to-right" evidence="9">
        <dbReference type="Rhea" id="RHEA:67941"/>
    </physiologicalReaction>
</comment>
<comment type="cofactor">
    <cofactor evidence="2">
        <name>FMN</name>
        <dbReference type="ChEBI" id="CHEBI:58210"/>
    </cofactor>
</comment>
<comment type="pathway">
    <text evidence="9">Lipid metabolism; fatty acid metabolism.</text>
</comment>
<comment type="subunit">
    <text evidence="2">Homotetramer.</text>
</comment>
<comment type="interaction">
    <interactant intactId="EBI-8803200">
        <id>Q9NYQ3</id>
    </interactant>
    <interactant intactId="EBI-10320311">
        <id>Q9UDX3</id>
        <label>SEC14L4</label>
    </interactant>
    <organismsDiffer>false</organismsDiffer>
    <experiments>3</experiments>
</comment>
<comment type="subcellular location">
    <subcellularLocation>
        <location evidence="5">Peroxisome</location>
    </subcellularLocation>
</comment>
<comment type="alternative products">
    <event type="alternative splicing"/>
    <isoform>
        <id>Q9NYQ3-1</id>
        <name>1</name>
        <sequence type="displayed"/>
    </isoform>
    <isoform>
        <id>Q9NYQ3-2</id>
        <name>2</name>
        <sequence type="described" ref="VSP_055095"/>
    </isoform>
</comment>
<comment type="tissue specificity">
    <text evidence="5">Expressed in the liver and kidney.</text>
</comment>
<comment type="similarity">
    <text evidence="4">Belongs to the FMN-dependent alpha-hydroxy acid dehydrogenase family.</text>
</comment>
<sequence length="351" mass="38839">MSLVCLTDFQAHAREQLSKSTRDFIEGGADDSITRDDNIAAFKRIRLRPRYLRDVSEVDTRTTIQGEEISAPICIAPTGFHCLVWPDGEMSTARAAQAAGICYITSTFASCSLEDIVIAAPEGLRWFQLYVHPDLQLNKQLIQRVESLGFKALVITLDTPVCGNRRHDIRNQLRRNLTLTDLQSPKKGNAIPYFQMTPISTSLCWNDLSWFQSITRLPIILKGILTKEDAELAVKHNVQGIIVSNHGGRQLDEVLASIDALTEVVAAVKGKIEVYLDGGVRTGNDVLKALALGAKCIFLGRPILWGLACKGEHGVKEVLNILTNEFHTSMALTGCRSVAEINRNLVQFSRL</sequence>
<keyword id="KW-0025">Alternative splicing</keyword>
<keyword id="KW-0276">Fatty acid metabolism</keyword>
<keyword id="KW-0285">Flavoprotein</keyword>
<keyword id="KW-0288">FMN</keyword>
<keyword id="KW-0443">Lipid metabolism</keyword>
<keyword id="KW-0560">Oxidoreductase</keyword>
<keyword id="KW-0576">Peroxisome</keyword>
<keyword id="KW-0597">Phosphoprotein</keyword>
<keyword id="KW-1267">Proteomics identification</keyword>
<keyword id="KW-1185">Reference proteome</keyword>
<gene>
    <name type="primary">HAO2</name>
    <name type="synonym">HAOX2</name>
    <name type="ORF">GIG16</name>
</gene>